<proteinExistence type="inferred from homology"/>
<dbReference type="EC" id="2.7.1.71" evidence="1"/>
<dbReference type="EMBL" id="CP000802">
    <property type="protein sequence ID" value="ABV07801.1"/>
    <property type="molecule type" value="Genomic_DNA"/>
</dbReference>
<dbReference type="RefSeq" id="WP_000818618.1">
    <property type="nucleotide sequence ID" value="NC_009800.1"/>
</dbReference>
<dbReference type="SMR" id="A8A5J7"/>
<dbReference type="GeneID" id="93778608"/>
<dbReference type="KEGG" id="ecx:EcHS_A3586"/>
<dbReference type="HOGENOM" id="CLU_057607_2_2_6"/>
<dbReference type="UniPathway" id="UPA00053">
    <property type="reaction ID" value="UER00088"/>
</dbReference>
<dbReference type="GO" id="GO:0005829">
    <property type="term" value="C:cytosol"/>
    <property type="evidence" value="ECO:0007669"/>
    <property type="project" value="TreeGrafter"/>
</dbReference>
<dbReference type="GO" id="GO:0005524">
    <property type="term" value="F:ATP binding"/>
    <property type="evidence" value="ECO:0007669"/>
    <property type="project" value="UniProtKB-UniRule"/>
</dbReference>
<dbReference type="GO" id="GO:0000287">
    <property type="term" value="F:magnesium ion binding"/>
    <property type="evidence" value="ECO:0007669"/>
    <property type="project" value="UniProtKB-UniRule"/>
</dbReference>
<dbReference type="GO" id="GO:0004765">
    <property type="term" value="F:shikimate kinase activity"/>
    <property type="evidence" value="ECO:0007669"/>
    <property type="project" value="UniProtKB-UniRule"/>
</dbReference>
<dbReference type="GO" id="GO:0008652">
    <property type="term" value="P:amino acid biosynthetic process"/>
    <property type="evidence" value="ECO:0007669"/>
    <property type="project" value="UniProtKB-KW"/>
</dbReference>
<dbReference type="GO" id="GO:0009073">
    <property type="term" value="P:aromatic amino acid family biosynthetic process"/>
    <property type="evidence" value="ECO:0007669"/>
    <property type="project" value="UniProtKB-KW"/>
</dbReference>
<dbReference type="GO" id="GO:0009423">
    <property type="term" value="P:chorismate biosynthetic process"/>
    <property type="evidence" value="ECO:0007669"/>
    <property type="project" value="UniProtKB-UniRule"/>
</dbReference>
<dbReference type="CDD" id="cd00464">
    <property type="entry name" value="SK"/>
    <property type="match status" value="1"/>
</dbReference>
<dbReference type="FunFam" id="3.40.50.300:FF:000099">
    <property type="entry name" value="Shikimate kinase 1"/>
    <property type="match status" value="1"/>
</dbReference>
<dbReference type="Gene3D" id="3.40.50.300">
    <property type="entry name" value="P-loop containing nucleotide triphosphate hydrolases"/>
    <property type="match status" value="1"/>
</dbReference>
<dbReference type="HAMAP" id="MF_00109">
    <property type="entry name" value="Shikimate_kinase"/>
    <property type="match status" value="1"/>
</dbReference>
<dbReference type="InterPro" id="IPR027417">
    <property type="entry name" value="P-loop_NTPase"/>
</dbReference>
<dbReference type="InterPro" id="IPR031322">
    <property type="entry name" value="Shikimate/glucono_kinase"/>
</dbReference>
<dbReference type="InterPro" id="IPR000623">
    <property type="entry name" value="Shikimate_kinase/TSH1"/>
</dbReference>
<dbReference type="InterPro" id="IPR023000">
    <property type="entry name" value="Shikimate_kinase_CS"/>
</dbReference>
<dbReference type="NCBIfam" id="NF003456">
    <property type="entry name" value="PRK05057.1"/>
    <property type="match status" value="1"/>
</dbReference>
<dbReference type="PANTHER" id="PTHR21087">
    <property type="entry name" value="SHIKIMATE KINASE"/>
    <property type="match status" value="1"/>
</dbReference>
<dbReference type="PANTHER" id="PTHR21087:SF16">
    <property type="entry name" value="SHIKIMATE KINASE 1, CHLOROPLASTIC"/>
    <property type="match status" value="1"/>
</dbReference>
<dbReference type="Pfam" id="PF01202">
    <property type="entry name" value="SKI"/>
    <property type="match status" value="1"/>
</dbReference>
<dbReference type="PRINTS" id="PR01100">
    <property type="entry name" value="SHIKIMTKNASE"/>
</dbReference>
<dbReference type="SUPFAM" id="SSF52540">
    <property type="entry name" value="P-loop containing nucleoside triphosphate hydrolases"/>
    <property type="match status" value="1"/>
</dbReference>
<dbReference type="PROSITE" id="PS01128">
    <property type="entry name" value="SHIKIMATE_KINASE"/>
    <property type="match status" value="1"/>
</dbReference>
<name>AROK_ECOHS</name>
<comment type="function">
    <text evidence="1">Catalyzes the specific phosphorylation of the 3-hydroxyl group of shikimic acid using ATP as a cosubstrate.</text>
</comment>
<comment type="catalytic activity">
    <reaction evidence="1">
        <text>shikimate + ATP = 3-phosphoshikimate + ADP + H(+)</text>
        <dbReference type="Rhea" id="RHEA:13121"/>
        <dbReference type="ChEBI" id="CHEBI:15378"/>
        <dbReference type="ChEBI" id="CHEBI:30616"/>
        <dbReference type="ChEBI" id="CHEBI:36208"/>
        <dbReference type="ChEBI" id="CHEBI:145989"/>
        <dbReference type="ChEBI" id="CHEBI:456216"/>
        <dbReference type="EC" id="2.7.1.71"/>
    </reaction>
</comment>
<comment type="cofactor">
    <cofactor evidence="1">
        <name>Mg(2+)</name>
        <dbReference type="ChEBI" id="CHEBI:18420"/>
    </cofactor>
    <text evidence="1">Binds 1 Mg(2+) ion per subunit.</text>
</comment>
<comment type="pathway">
    <text evidence="1">Metabolic intermediate biosynthesis; chorismate biosynthesis; chorismate from D-erythrose 4-phosphate and phosphoenolpyruvate: step 5/7.</text>
</comment>
<comment type="subunit">
    <text evidence="1">Monomer.</text>
</comment>
<comment type="subcellular location">
    <subcellularLocation>
        <location evidence="1">Cytoplasm</location>
    </subcellularLocation>
</comment>
<comment type="similarity">
    <text evidence="1">Belongs to the shikimate kinase family.</text>
</comment>
<gene>
    <name evidence="1" type="primary">aroK</name>
    <name type="ordered locus">EcHS_A3586</name>
</gene>
<feature type="chain" id="PRO_1000057724" description="Shikimate kinase 1">
    <location>
        <begin position="1"/>
        <end position="173"/>
    </location>
</feature>
<feature type="binding site" evidence="1">
    <location>
        <begin position="14"/>
        <end position="19"/>
    </location>
    <ligand>
        <name>ATP</name>
        <dbReference type="ChEBI" id="CHEBI:30616"/>
    </ligand>
</feature>
<feature type="binding site" evidence="1">
    <location>
        <position position="18"/>
    </location>
    <ligand>
        <name>Mg(2+)</name>
        <dbReference type="ChEBI" id="CHEBI:18420"/>
    </ligand>
</feature>
<feature type="binding site" evidence="1">
    <location>
        <position position="36"/>
    </location>
    <ligand>
        <name>substrate</name>
    </ligand>
</feature>
<feature type="binding site" evidence="1">
    <location>
        <position position="60"/>
    </location>
    <ligand>
        <name>substrate</name>
    </ligand>
</feature>
<feature type="binding site" evidence="1">
    <location>
        <position position="82"/>
    </location>
    <ligand>
        <name>substrate</name>
    </ligand>
</feature>
<feature type="binding site" evidence="1">
    <location>
        <position position="120"/>
    </location>
    <ligand>
        <name>ATP</name>
        <dbReference type="ChEBI" id="CHEBI:30616"/>
    </ligand>
</feature>
<feature type="binding site" evidence="1">
    <location>
        <position position="140"/>
    </location>
    <ligand>
        <name>substrate</name>
    </ligand>
</feature>
<feature type="binding site" evidence="1">
    <location>
        <position position="157"/>
    </location>
    <ligand>
        <name>ATP</name>
        <dbReference type="ChEBI" id="CHEBI:30616"/>
    </ligand>
</feature>
<reference key="1">
    <citation type="journal article" date="2008" name="J. Bacteriol.">
        <title>The pangenome structure of Escherichia coli: comparative genomic analysis of E. coli commensal and pathogenic isolates.</title>
        <authorList>
            <person name="Rasko D.A."/>
            <person name="Rosovitz M.J."/>
            <person name="Myers G.S.A."/>
            <person name="Mongodin E.F."/>
            <person name="Fricke W.F."/>
            <person name="Gajer P."/>
            <person name="Crabtree J."/>
            <person name="Sebaihia M."/>
            <person name="Thomson N.R."/>
            <person name="Chaudhuri R."/>
            <person name="Henderson I.R."/>
            <person name="Sperandio V."/>
            <person name="Ravel J."/>
        </authorList>
    </citation>
    <scope>NUCLEOTIDE SEQUENCE [LARGE SCALE GENOMIC DNA]</scope>
    <source>
        <strain>HS</strain>
    </source>
</reference>
<organism>
    <name type="scientific">Escherichia coli O9:H4 (strain HS)</name>
    <dbReference type="NCBI Taxonomy" id="331112"/>
    <lineage>
        <taxon>Bacteria</taxon>
        <taxon>Pseudomonadati</taxon>
        <taxon>Pseudomonadota</taxon>
        <taxon>Gammaproteobacteria</taxon>
        <taxon>Enterobacterales</taxon>
        <taxon>Enterobacteriaceae</taxon>
        <taxon>Escherichia</taxon>
    </lineage>
</organism>
<protein>
    <recommendedName>
        <fullName evidence="1">Shikimate kinase 1</fullName>
        <shortName evidence="1">SK 1</shortName>
        <ecNumber evidence="1">2.7.1.71</ecNumber>
    </recommendedName>
</protein>
<sequence>MAEKRNIFLVGPMGAGKSTIGRQLAQQLNMEFYDSDQEIEKRTGADVGWVFDLEGEEGFRDREEKVINELTEKQGIVLATGGGSVKSRETRNRLSARGVVVYLETTIEKQLARTQRDKKRPLLHVETPPREVLEALANERNPLYEEIADVTIRTDDQSAKVVANQIIHMLESN</sequence>
<evidence type="ECO:0000255" key="1">
    <source>
        <dbReference type="HAMAP-Rule" id="MF_00109"/>
    </source>
</evidence>
<accession>A8A5J7</accession>
<keyword id="KW-0028">Amino-acid biosynthesis</keyword>
<keyword id="KW-0057">Aromatic amino acid biosynthesis</keyword>
<keyword id="KW-0067">ATP-binding</keyword>
<keyword id="KW-0963">Cytoplasm</keyword>
<keyword id="KW-0418">Kinase</keyword>
<keyword id="KW-0460">Magnesium</keyword>
<keyword id="KW-0479">Metal-binding</keyword>
<keyword id="KW-0547">Nucleotide-binding</keyword>
<keyword id="KW-0808">Transferase</keyword>